<keyword id="KW-0143">Chaperone</keyword>
<keyword id="KW-0342">GTP-binding</keyword>
<keyword id="KW-0378">Hydrolase</keyword>
<keyword id="KW-0479">Metal-binding</keyword>
<keyword id="KW-0547">Nucleotide-binding</keyword>
<keyword id="KW-0539">Nucleus</keyword>
<keyword id="KW-1185">Reference proteome</keyword>
<keyword id="KW-0862">Zinc</keyword>
<gene>
    <name evidence="4" type="primary">zng1</name>
    <name evidence="6" type="synonym">cbwd</name>
</gene>
<comment type="function">
    <text evidence="1 3">Zinc chaperone that directly transfers zinc cofactor to target metalloproteins, thereby activating them (PubMed:35584702). Catalyzes zinc insertion into the active site of methionine aminopeptidase METAP1, which function to cleave the initiator methionine from polypeptides during or after protein translation (PubMed:35584702). Mechanistically, the N-terminal psi-PxLVp motif binds to the C6H2-type zinc finger of inactive form of METAP1 (PubMed:35584702). After formation of the docked complex, zinc is transferred from the CXCC motif in the GTPase domain of ZNG1 to the zinc binding site in the peptidase domain of METAP1 in a process requiring GTP hydrolysis. GTP/GDP exchange is required for release of active METAP1 (By similarity).</text>
</comment>
<comment type="catalytic activity">
    <reaction evidence="1">
        <text>GTP + H2O = GDP + phosphate + H(+)</text>
        <dbReference type="Rhea" id="RHEA:19669"/>
        <dbReference type="ChEBI" id="CHEBI:15377"/>
        <dbReference type="ChEBI" id="CHEBI:15378"/>
        <dbReference type="ChEBI" id="CHEBI:37565"/>
        <dbReference type="ChEBI" id="CHEBI:43474"/>
        <dbReference type="ChEBI" id="CHEBI:58189"/>
    </reaction>
    <physiologicalReaction direction="left-to-right" evidence="1">
        <dbReference type="Rhea" id="RHEA:19670"/>
    </physiologicalReaction>
</comment>
<comment type="subcellular location">
    <subcellularLocation>
        <location evidence="1">Nucleus</location>
    </subcellularLocation>
</comment>
<comment type="disruption phenotype">
    <text evidence="3">Mutant fishes survive to adulthood under zinc-replete conditions, but display moderate developmental delay, characterized by reduced height at anterior anal fin, standard length and snout to vent length at 6 days post fertilization (dpf) (PubMed:35584702). They show impaired zinc homeostasis and cells show impaired activity of metap1 (PubMed:35584702).</text>
</comment>
<comment type="similarity">
    <text evidence="5">Belongs to the SIMIBI class G3E GTPase family. ZNG1 subfamily.</text>
</comment>
<proteinExistence type="evidence at transcript level"/>
<evidence type="ECO:0000250" key="1">
    <source>
        <dbReference type="UniProtKB" id="Q8VEH6"/>
    </source>
</evidence>
<evidence type="ECO:0000255" key="2"/>
<evidence type="ECO:0000269" key="3">
    <source>
    </source>
</evidence>
<evidence type="ECO:0000303" key="4">
    <source>
    </source>
</evidence>
<evidence type="ECO:0000305" key="5"/>
<evidence type="ECO:0000312" key="6">
    <source>
        <dbReference type="ZFIN" id="ZDB-GENE-040426-2388"/>
    </source>
</evidence>
<reference key="1">
    <citation type="journal article" date="2013" name="Nature">
        <title>The zebrafish reference genome sequence and its relationship to the human genome.</title>
        <authorList>
            <person name="Howe K."/>
            <person name="Clark M.D."/>
            <person name="Torroja C.F."/>
            <person name="Torrance J."/>
            <person name="Berthelot C."/>
            <person name="Muffato M."/>
            <person name="Collins J.E."/>
            <person name="Humphray S."/>
            <person name="McLaren K."/>
            <person name="Matthews L."/>
            <person name="McLaren S."/>
            <person name="Sealy I."/>
            <person name="Caccamo M."/>
            <person name="Churcher C."/>
            <person name="Scott C."/>
            <person name="Barrett J.C."/>
            <person name="Koch R."/>
            <person name="Rauch G.J."/>
            <person name="White S."/>
            <person name="Chow W."/>
            <person name="Kilian B."/>
            <person name="Quintais L.T."/>
            <person name="Guerra-Assuncao J.A."/>
            <person name="Zhou Y."/>
            <person name="Gu Y."/>
            <person name="Yen J."/>
            <person name="Vogel J.H."/>
            <person name="Eyre T."/>
            <person name="Redmond S."/>
            <person name="Banerjee R."/>
            <person name="Chi J."/>
            <person name="Fu B."/>
            <person name="Langley E."/>
            <person name="Maguire S.F."/>
            <person name="Laird G.K."/>
            <person name="Lloyd D."/>
            <person name="Kenyon E."/>
            <person name="Donaldson S."/>
            <person name="Sehra H."/>
            <person name="Almeida-King J."/>
            <person name="Loveland J."/>
            <person name="Trevanion S."/>
            <person name="Jones M."/>
            <person name="Quail M."/>
            <person name="Willey D."/>
            <person name="Hunt A."/>
            <person name="Burton J."/>
            <person name="Sims S."/>
            <person name="McLay K."/>
            <person name="Plumb B."/>
            <person name="Davis J."/>
            <person name="Clee C."/>
            <person name="Oliver K."/>
            <person name="Clark R."/>
            <person name="Riddle C."/>
            <person name="Elliot D."/>
            <person name="Threadgold G."/>
            <person name="Harden G."/>
            <person name="Ware D."/>
            <person name="Begum S."/>
            <person name="Mortimore B."/>
            <person name="Kerry G."/>
            <person name="Heath P."/>
            <person name="Phillimore B."/>
            <person name="Tracey A."/>
            <person name="Corby N."/>
            <person name="Dunn M."/>
            <person name="Johnson C."/>
            <person name="Wood J."/>
            <person name="Clark S."/>
            <person name="Pelan S."/>
            <person name="Griffiths G."/>
            <person name="Smith M."/>
            <person name="Glithero R."/>
            <person name="Howden P."/>
            <person name="Barker N."/>
            <person name="Lloyd C."/>
            <person name="Stevens C."/>
            <person name="Harley J."/>
            <person name="Holt K."/>
            <person name="Panagiotidis G."/>
            <person name="Lovell J."/>
            <person name="Beasley H."/>
            <person name="Henderson C."/>
            <person name="Gordon D."/>
            <person name="Auger K."/>
            <person name="Wright D."/>
            <person name="Collins J."/>
            <person name="Raisen C."/>
            <person name="Dyer L."/>
            <person name="Leung K."/>
            <person name="Robertson L."/>
            <person name="Ambridge K."/>
            <person name="Leongamornlert D."/>
            <person name="McGuire S."/>
            <person name="Gilderthorp R."/>
            <person name="Griffiths C."/>
            <person name="Manthravadi D."/>
            <person name="Nichol S."/>
            <person name="Barker G."/>
            <person name="Whitehead S."/>
            <person name="Kay M."/>
            <person name="Brown J."/>
            <person name="Murnane C."/>
            <person name="Gray E."/>
            <person name="Humphries M."/>
            <person name="Sycamore N."/>
            <person name="Barker D."/>
            <person name="Saunders D."/>
            <person name="Wallis J."/>
            <person name="Babbage A."/>
            <person name="Hammond S."/>
            <person name="Mashreghi-Mohammadi M."/>
            <person name="Barr L."/>
            <person name="Martin S."/>
            <person name="Wray P."/>
            <person name="Ellington A."/>
            <person name="Matthews N."/>
            <person name="Ellwood M."/>
            <person name="Woodmansey R."/>
            <person name="Clark G."/>
            <person name="Cooper J."/>
            <person name="Tromans A."/>
            <person name="Grafham D."/>
            <person name="Skuce C."/>
            <person name="Pandian R."/>
            <person name="Andrews R."/>
            <person name="Harrison E."/>
            <person name="Kimberley A."/>
            <person name="Garnett J."/>
            <person name="Fosker N."/>
            <person name="Hall R."/>
            <person name="Garner P."/>
            <person name="Kelly D."/>
            <person name="Bird C."/>
            <person name="Palmer S."/>
            <person name="Gehring I."/>
            <person name="Berger A."/>
            <person name="Dooley C.M."/>
            <person name="Ersan-Urun Z."/>
            <person name="Eser C."/>
            <person name="Geiger H."/>
            <person name="Geisler M."/>
            <person name="Karotki L."/>
            <person name="Kirn A."/>
            <person name="Konantz J."/>
            <person name="Konantz M."/>
            <person name="Oberlander M."/>
            <person name="Rudolph-Geiger S."/>
            <person name="Teucke M."/>
            <person name="Lanz C."/>
            <person name="Raddatz G."/>
            <person name="Osoegawa K."/>
            <person name="Zhu B."/>
            <person name="Rapp A."/>
            <person name="Widaa S."/>
            <person name="Langford C."/>
            <person name="Yang F."/>
            <person name="Schuster S.C."/>
            <person name="Carter N.P."/>
            <person name="Harrow J."/>
            <person name="Ning Z."/>
            <person name="Herrero J."/>
            <person name="Searle S.M."/>
            <person name="Enright A."/>
            <person name="Geisler R."/>
            <person name="Plasterk R.H."/>
            <person name="Lee C."/>
            <person name="Westerfield M."/>
            <person name="de Jong P.J."/>
            <person name="Zon L.I."/>
            <person name="Postlethwait J.H."/>
            <person name="Nusslein-Volhard C."/>
            <person name="Hubbard T.J."/>
            <person name="Roest Crollius H."/>
            <person name="Rogers J."/>
            <person name="Stemple D.L."/>
        </authorList>
    </citation>
    <scope>NUCLEOTIDE SEQUENCE [LARGE SCALE GENOMIC DNA]</scope>
    <source>
        <strain>Tuebingen</strain>
    </source>
</reference>
<reference key="2">
    <citation type="submission" date="2004-01" db="EMBL/GenBank/DDBJ databases">
        <authorList>
            <consortium name="NIH - Zebrafish Gene Collection (ZGC) project"/>
        </authorList>
    </citation>
    <scope>NUCLEOTIDE SEQUENCE [LARGE SCALE MRNA]</scope>
</reference>
<reference key="3">
    <citation type="journal article" date="2022" name="Cell">
        <title>Zn-regulated GTPase metalloprotein activator 1 modulates vertebrate zinc homeostasis.</title>
        <authorList>
            <person name="Weiss A."/>
            <person name="Murdoch C.C."/>
            <person name="Edmonds K.A."/>
            <person name="Jordan M.R."/>
            <person name="Monteith A.J."/>
            <person name="Perera Y.R."/>
            <person name="Rodriguez Nassif A.M."/>
            <person name="Petoletti A.M."/>
            <person name="Beavers W.N."/>
            <person name="Munneke M.J."/>
            <person name="Drury S.L."/>
            <person name="Krystofiak E.S."/>
            <person name="Thalluri K."/>
            <person name="Wu H."/>
            <person name="Kruse A.R.S."/>
            <person name="DiMarchi R.D."/>
            <person name="Caprioli R.M."/>
            <person name="Spraggins J.M."/>
            <person name="Chazin W.J."/>
            <person name="Giedroc D.P."/>
            <person name="Skaar E.P."/>
        </authorList>
    </citation>
    <scope>FUNCTION</scope>
    <scope>DISRUPTION PHENOTYPE</scope>
</reference>
<accession>B0R0B1</accession>
<accession>Q6P0V9</accession>
<protein>
    <recommendedName>
        <fullName evidence="4">Zinc-regulated GTPase metalloprotein activator 1</fullName>
        <ecNumber evidence="1">3.6.5.-</ecNumber>
    </recommendedName>
    <alternativeName>
        <fullName evidence="5">Cobalamin synthase W domain-containing protein 1</fullName>
        <shortName evidence="5">COBW domain-containing protein 1</shortName>
    </alternativeName>
</protein>
<sequence length="366" mass="41019">MEDEDECPELVPIKEKPSGPTAQIPVTIITGYLGAGKTTLLNYILTEQHNKRIAVILNEFGEGSALEKSLAVSQAGELYEEWLELRNGCLCCSVKDNGLKAIENLMEKKGKFDYILLETTGLADPGAVASMFWVDAELGSDVYLDGIVTVIDAKYGLQHLTEEKPEGLINEAARQIALADLTIINKTDLVHETELLKLRDTVRSINALVKILETQKSRVDLSEVLDLHSFDTKDGERLTKKLQLVKTSQPHLDKSMLTITFEVPGSVSEDLLNIFIQELLWEKTFKNKAGLPMTVIRLKGILSLQQKQKKVMLQGVHELYELEETPEFWADQEPRLNRLVFIGRNLDGEILKKEFISAVSNKDSVE</sequence>
<dbReference type="EC" id="3.6.5.-" evidence="1"/>
<dbReference type="EMBL" id="AL845168">
    <property type="status" value="NOT_ANNOTATED_CDS"/>
    <property type="molecule type" value="Genomic_DNA"/>
</dbReference>
<dbReference type="EMBL" id="BC065429">
    <property type="protein sequence ID" value="AAH65429.1"/>
    <property type="molecule type" value="mRNA"/>
</dbReference>
<dbReference type="RefSeq" id="NP_998418.1">
    <property type="nucleotide sequence ID" value="NM_213253.1"/>
</dbReference>
<dbReference type="RefSeq" id="XP_005167208.1">
    <property type="nucleotide sequence ID" value="XM_005167151.3"/>
</dbReference>
<dbReference type="SMR" id="B0R0B1"/>
<dbReference type="FunCoup" id="B0R0B1">
    <property type="interactions" value="607"/>
</dbReference>
<dbReference type="STRING" id="7955.ENSDARP00000009109"/>
<dbReference type="PaxDb" id="7955-ENSDARP00000009109"/>
<dbReference type="PeptideAtlas" id="B0R0B1"/>
<dbReference type="Ensembl" id="ENSDART00000012132">
    <property type="protein sequence ID" value="ENSDARP00000009109"/>
    <property type="gene ID" value="ENSDARG00000004318"/>
</dbReference>
<dbReference type="GeneID" id="406536"/>
<dbReference type="KEGG" id="dre:406536"/>
<dbReference type="AGR" id="ZFIN:ZDB-GENE-040426-2388"/>
<dbReference type="CTD" id="406536"/>
<dbReference type="ZFIN" id="ZDB-GENE-040426-2388">
    <property type="gene designation" value="cbwd"/>
</dbReference>
<dbReference type="eggNOG" id="KOG2743">
    <property type="taxonomic scope" value="Eukaryota"/>
</dbReference>
<dbReference type="HOGENOM" id="CLU_017452_0_1_1"/>
<dbReference type="InParanoid" id="B0R0B1"/>
<dbReference type="OMA" id="HSQGFET"/>
<dbReference type="OrthoDB" id="258627at2759"/>
<dbReference type="PhylomeDB" id="B0R0B1"/>
<dbReference type="TreeFam" id="TF332679"/>
<dbReference type="PRO" id="PR:B0R0B1"/>
<dbReference type="Proteomes" id="UP000000437">
    <property type="component" value="Alternate scaffold 8"/>
</dbReference>
<dbReference type="Proteomes" id="UP000000437">
    <property type="component" value="Chromosome 8"/>
</dbReference>
<dbReference type="Bgee" id="ENSDARG00000004318">
    <property type="expression patterns" value="Expressed in cardiac ventricle and 27 other cell types or tissues"/>
</dbReference>
<dbReference type="GO" id="GO:0005737">
    <property type="term" value="C:cytoplasm"/>
    <property type="evidence" value="ECO:0000318"/>
    <property type="project" value="GO_Central"/>
</dbReference>
<dbReference type="GO" id="GO:0005634">
    <property type="term" value="C:nucleus"/>
    <property type="evidence" value="ECO:0000250"/>
    <property type="project" value="UniProtKB"/>
</dbReference>
<dbReference type="GO" id="GO:0005525">
    <property type="term" value="F:GTP binding"/>
    <property type="evidence" value="ECO:0007669"/>
    <property type="project" value="UniProtKB-KW"/>
</dbReference>
<dbReference type="GO" id="GO:0003924">
    <property type="term" value="F:GTPase activity"/>
    <property type="evidence" value="ECO:0000314"/>
    <property type="project" value="UniProtKB"/>
</dbReference>
<dbReference type="GO" id="GO:0046872">
    <property type="term" value="F:metal ion binding"/>
    <property type="evidence" value="ECO:0007669"/>
    <property type="project" value="UniProtKB-KW"/>
</dbReference>
<dbReference type="GO" id="GO:0140827">
    <property type="term" value="F:zinc chaperone activity"/>
    <property type="evidence" value="ECO:0000314"/>
    <property type="project" value="UniProtKB"/>
</dbReference>
<dbReference type="GO" id="GO:0006882">
    <property type="term" value="P:intracellular zinc ion homeostasis"/>
    <property type="evidence" value="ECO:0000314"/>
    <property type="project" value="UniProtKB"/>
</dbReference>
<dbReference type="CDD" id="cd03112">
    <property type="entry name" value="CobW-like"/>
    <property type="match status" value="1"/>
</dbReference>
<dbReference type="Gene3D" id="3.30.1220.10">
    <property type="entry name" value="CobW-like, C-terminal domain"/>
    <property type="match status" value="1"/>
</dbReference>
<dbReference type="Gene3D" id="3.40.50.300">
    <property type="entry name" value="P-loop containing nucleotide triphosphate hydrolases"/>
    <property type="match status" value="1"/>
</dbReference>
<dbReference type="InterPro" id="IPR036627">
    <property type="entry name" value="CobW-likC_sf"/>
</dbReference>
<dbReference type="InterPro" id="IPR011629">
    <property type="entry name" value="CobW-like_C"/>
</dbReference>
<dbReference type="InterPro" id="IPR003495">
    <property type="entry name" value="CobW/HypB/UreG_nucleotide-bd"/>
</dbReference>
<dbReference type="InterPro" id="IPR027417">
    <property type="entry name" value="P-loop_NTPase"/>
</dbReference>
<dbReference type="InterPro" id="IPR051316">
    <property type="entry name" value="Zinc-reg_GTPase_activator"/>
</dbReference>
<dbReference type="PANTHER" id="PTHR13748">
    <property type="entry name" value="COBW-RELATED"/>
    <property type="match status" value="1"/>
</dbReference>
<dbReference type="PANTHER" id="PTHR13748:SF31">
    <property type="entry name" value="ZINC-REGULATED GTPASE METALLOPROTEIN ACTIVATOR 1A-RELATED"/>
    <property type="match status" value="1"/>
</dbReference>
<dbReference type="Pfam" id="PF02492">
    <property type="entry name" value="cobW"/>
    <property type="match status" value="1"/>
</dbReference>
<dbReference type="Pfam" id="PF07683">
    <property type="entry name" value="CobW_C"/>
    <property type="match status" value="1"/>
</dbReference>
<dbReference type="SMART" id="SM00833">
    <property type="entry name" value="CobW_C"/>
    <property type="match status" value="1"/>
</dbReference>
<dbReference type="SUPFAM" id="SSF90002">
    <property type="entry name" value="Hypothetical protein YjiA, C-terminal domain"/>
    <property type="match status" value="1"/>
</dbReference>
<dbReference type="SUPFAM" id="SSF52540">
    <property type="entry name" value="P-loop containing nucleoside triphosphate hydrolases"/>
    <property type="match status" value="1"/>
</dbReference>
<name>ZNG1_DANRE</name>
<organism>
    <name type="scientific">Danio rerio</name>
    <name type="common">Zebrafish</name>
    <name type="synonym">Brachydanio rerio</name>
    <dbReference type="NCBI Taxonomy" id="7955"/>
    <lineage>
        <taxon>Eukaryota</taxon>
        <taxon>Metazoa</taxon>
        <taxon>Chordata</taxon>
        <taxon>Craniata</taxon>
        <taxon>Vertebrata</taxon>
        <taxon>Euteleostomi</taxon>
        <taxon>Actinopterygii</taxon>
        <taxon>Neopterygii</taxon>
        <taxon>Teleostei</taxon>
        <taxon>Ostariophysi</taxon>
        <taxon>Cypriniformes</taxon>
        <taxon>Danionidae</taxon>
        <taxon>Danioninae</taxon>
        <taxon>Danio</taxon>
    </lineage>
</organism>
<feature type="chain" id="PRO_0000456682" description="Zinc-regulated GTPase metalloprotein activator 1">
    <location>
        <begin position="1"/>
        <end position="366"/>
    </location>
</feature>
<feature type="domain" description="CobW C-terminal" evidence="2">
    <location>
        <begin position="258"/>
        <end position="357"/>
    </location>
</feature>
<feature type="short sequence motif" description="psi-PxLVp motif" evidence="1">
    <location>
        <begin position="5"/>
        <end position="12"/>
    </location>
</feature>
<feature type="short sequence motif" description="CXCC motif" evidence="2">
    <location>
        <begin position="89"/>
        <end position="92"/>
    </location>
</feature>
<feature type="binding site" evidence="2">
    <location>
        <begin position="31"/>
        <end position="38"/>
    </location>
    <ligand>
        <name>GTP</name>
        <dbReference type="ChEBI" id="CHEBI:37565"/>
    </ligand>
</feature>
<feature type="binding site" evidence="1">
    <location>
        <position position="89"/>
    </location>
    <ligand>
        <name>Zn(2+)</name>
        <dbReference type="ChEBI" id="CHEBI:29105"/>
    </ligand>
</feature>
<feature type="binding site" evidence="1">
    <location>
        <position position="91"/>
    </location>
    <ligand>
        <name>Zn(2+)</name>
        <dbReference type="ChEBI" id="CHEBI:29105"/>
    </ligand>
</feature>
<feature type="binding site" evidence="2">
    <location>
        <begin position="92"/>
        <end position="96"/>
    </location>
    <ligand>
        <name>GTP</name>
        <dbReference type="ChEBI" id="CHEBI:37565"/>
    </ligand>
</feature>
<feature type="binding site" evidence="1">
    <location>
        <position position="92"/>
    </location>
    <ligand>
        <name>Zn(2+)</name>
        <dbReference type="ChEBI" id="CHEBI:29105"/>
    </ligand>
</feature>
<feature type="binding site" evidence="2">
    <location>
        <begin position="185"/>
        <end position="188"/>
    </location>
    <ligand>
        <name>GTP</name>
        <dbReference type="ChEBI" id="CHEBI:37565"/>
    </ligand>
</feature>
<feature type="sequence conflict" description="In Ref. 2; AAH65429." evidence="5" ref="2">
    <original>A</original>
    <variation>G</variation>
    <location>
        <position position="207"/>
    </location>
</feature>